<reference key="1">
    <citation type="journal article" date="2016" name="Proc. Natl. Acad. Sci. U.S.A.">
        <title>Biosynthetic investigation of phomopsins reveals a widespread pathway for ribosomal natural products in Ascomycetes.</title>
        <authorList>
            <person name="Ding W."/>
            <person name="Liu W.Q."/>
            <person name="Jia Y."/>
            <person name="Li Y."/>
            <person name="van der Donk W.A."/>
            <person name="Zhang Q."/>
        </authorList>
    </citation>
    <scope>NUCLEOTIDE SEQUENCE [GENOMIC DNA]</scope>
    <scope>FUNCTION</scope>
    <source>
        <strain>ATCC 26115 / IMI 115107 / C 1557</strain>
    </source>
</reference>
<reference key="2">
    <citation type="journal article" date="2021" name="Angew. Chem. Int. Ed.">
        <title>Biosynthetic studies of phomopsins unveil posttranslational installation of dehydroamino acids by ustYa family proteins.</title>
        <authorList>
            <person name="Sogahata K."/>
            <person name="Ozaki T."/>
            <person name="Igarashi Y."/>
            <person name="Naganuma Y."/>
            <person name="Liu C."/>
            <person name="Minami A."/>
            <person name="Oikawa H."/>
        </authorList>
    </citation>
    <scope>NOMENCLATURE</scope>
    <scope>FUNCTION</scope>
    <scope>PATHWAY</scope>
    <source>
        <strain>ATCC 26115 / IMI 115107 / C 1557</strain>
    </source>
</reference>
<evidence type="ECO:0000250" key="1">
    <source>
        <dbReference type="UniProtKB" id="B8NM67"/>
    </source>
</evidence>
<evidence type="ECO:0000255" key="2"/>
<evidence type="ECO:0000255" key="3">
    <source>
        <dbReference type="PROSITE-ProRule" id="PRU00498"/>
    </source>
</evidence>
<evidence type="ECO:0000269" key="4">
    <source>
    </source>
</evidence>
<evidence type="ECO:0000303" key="5">
    <source>
    </source>
</evidence>
<evidence type="ECO:0000303" key="6">
    <source>
    </source>
</evidence>
<evidence type="ECO:0000305" key="7"/>
<evidence type="ECO:0000305" key="8">
    <source>
    </source>
</evidence>
<feature type="chain" id="PRO_0000458339" description="UstYa family oxidase phomYc'">
    <location>
        <begin position="1"/>
        <end position="254"/>
    </location>
</feature>
<feature type="transmembrane region" description="Helical" evidence="2">
    <location>
        <begin position="38"/>
        <end position="58"/>
    </location>
</feature>
<feature type="short sequence motif" description="HXXHC 1" evidence="1">
    <location>
        <begin position="138"/>
        <end position="142"/>
    </location>
</feature>
<feature type="short sequence motif" description="HXXHC 2" evidence="1">
    <location>
        <begin position="173"/>
        <end position="177"/>
    </location>
</feature>
<feature type="glycosylation site" description="N-linked (GlcNAc...) asparagine" evidence="3">
    <location>
        <position position="64"/>
    </location>
</feature>
<feature type="glycosylation site" description="N-linked (GlcNAc...) asparagine" evidence="3">
    <location>
        <position position="159"/>
    </location>
</feature>
<sequence>MDRSGYFPVLDEDIPTKSELRLPLESKTSSRSRRWLHLVLVLQSVLIISLLASLHILGNRQPSNITCAKQLSPYSPYLEDGDLELEEFTELNHLMQPSPYRGQPTPEIEEAWVRLWRDYAHVSTRYGDDMLGFLNVFHQLHCLNLVRQYTYRDDYDYSNVTAFRAPQELVRGHIDHCIETIRKSIMCASDVTPVVFQLDDSRKSGFKSDFNMRRTCRNFDKIQDWAVANAVQGDFEKNMASSCTLSTPREKEKT</sequence>
<comment type="function">
    <text evidence="4 8">UstYa family oxidase; part of the gene cluster that mediates the biosynthesis of the phomopsins, a group of hexapeptide mycotoxins which infects lupins and causes lupinosis disease in livestock (PubMed:34608734). Within the pathway, phomYc' catalyzes the desaturation of the Ile moiety into 2,3-dehydroisoleucine (dIle) (PubMed:34608734). The pathway starts with the processing of the precursor phomA' by several endopeptidases including kexin proteases as well as the cluster-specific S41 family peptidase phomP1 and the oligopeptidase phomG' to produce 10 identical copies of the hexapeptide Tyr-Val-Ile-Pro-Ile-Asp. After being excised from the precursor peptide, the core peptides are cyclized and modified post-translationally by enzymes encoded within the gene cluster. The timing and order of proteolysis of the phomA' precursor and PTMs are still unknown. Two tyrosinase-like enzymes, phomQ1' and phomQ2, catalyze the chlorination and hydroxylation of Tyr, respectively. PhomYb, is proposed to be involved in the construction of the macrocyclic structure. The other 4 ustYa family proteins may be involved in PTMs that generate the unique structure of phomopsin A. PhomYa' is required for the hydroxylation of C-beta of Tyr. PhomYc', phomYd', and phomYe are responsible for the biosynthesis of 2,3-dehydroisoleucine (dIle), 2,3-dehydroaspartic acid (dAsp), and 3,4-dehydroproline (dPro), respectively. While dIle formation by phomYc' is indispensable for the installation of dAsp by phomYd', the order of the other PTMs have not been elucidated yet. Most of the biosynthetic enzymes likely have broad substrate specificity, and thus, there might be a metabolic grid from a precursor to phomopsin A. The enzyme(s) responsible for the biosynthesis of 3,4-dehydrovaline (dVal) have also not been identified yet. Finally, phomM' acts as an S-adenosylmethionine-dependent alpha-N-methyltransferase that catalyzes two successive N-methylation reactions, converting N-desmethyl-phomopsin A to phomopsin A and phomopsin A further to an N,N-dimethylated congener called phomopsin E (Probable).</text>
</comment>
<comment type="pathway">
    <text evidence="8">Mycotoxin biosynthesis.</text>
</comment>
<comment type="subcellular location">
    <subcellularLocation>
        <location evidence="2">Membrane</location>
        <topology evidence="2">Single-pass membrane protein</topology>
    </subcellularLocation>
</comment>
<comment type="domain">
    <text evidence="1">The 2 HXXHC motifs are conserved in ustYa family proteins and might form active sites.</text>
</comment>
<comment type="similarity">
    <text evidence="7">Belongs to the ustYa family.</text>
</comment>
<gene>
    <name evidence="6" type="primary">phomYc'</name>
    <name evidence="5" type="synonym">phomC</name>
</gene>
<name>PHYC2_DIALO</name>
<protein>
    <recommendedName>
        <fullName evidence="6">UstYa family oxidase phomYc'</fullName>
        <ecNumber evidence="8">1.-.-.-</ecNumber>
    </recommendedName>
    <alternativeName>
        <fullName evidence="6">Phomopsin biosynthesis cluster protein Yc'a</fullName>
    </alternativeName>
</protein>
<proteinExistence type="inferred from homology"/>
<dbReference type="EC" id="1.-.-.-" evidence="8"/>
<dbReference type="EMBL" id="KU645840">
    <property type="protein sequence ID" value="AMR44288.1"/>
    <property type="molecule type" value="Genomic_DNA"/>
</dbReference>
<dbReference type="GO" id="GO:0016020">
    <property type="term" value="C:membrane"/>
    <property type="evidence" value="ECO:0007669"/>
    <property type="project" value="UniProtKB-SubCell"/>
</dbReference>
<dbReference type="GO" id="GO:0016491">
    <property type="term" value="F:oxidoreductase activity"/>
    <property type="evidence" value="ECO:0007669"/>
    <property type="project" value="UniProtKB-KW"/>
</dbReference>
<dbReference type="GO" id="GO:0043386">
    <property type="term" value="P:mycotoxin biosynthetic process"/>
    <property type="evidence" value="ECO:0007669"/>
    <property type="project" value="InterPro"/>
</dbReference>
<dbReference type="InterPro" id="IPR021765">
    <property type="entry name" value="UstYa-like"/>
</dbReference>
<dbReference type="PANTHER" id="PTHR33365:SF4">
    <property type="entry name" value="CYCLOCHLOROTINE BIOSYNTHESIS PROTEIN O"/>
    <property type="match status" value="1"/>
</dbReference>
<dbReference type="PANTHER" id="PTHR33365">
    <property type="entry name" value="YALI0B05434P"/>
    <property type="match status" value="1"/>
</dbReference>
<dbReference type="Pfam" id="PF11807">
    <property type="entry name" value="UstYa"/>
    <property type="match status" value="1"/>
</dbReference>
<keyword id="KW-0325">Glycoprotein</keyword>
<keyword id="KW-0472">Membrane</keyword>
<keyword id="KW-0560">Oxidoreductase</keyword>
<keyword id="KW-0812">Transmembrane</keyword>
<keyword id="KW-1133">Transmembrane helix</keyword>
<keyword id="KW-0843">Virulence</keyword>
<accession>A0A142I736</accession>
<organism>
    <name type="scientific">Diaporthe leptostromiformis</name>
    <name type="common">Lupinosis disease fungus</name>
    <name type="synonym">Phomopsis leptostromiformis</name>
    <dbReference type="NCBI Taxonomy" id="291059"/>
    <lineage>
        <taxon>Eukaryota</taxon>
        <taxon>Fungi</taxon>
        <taxon>Dikarya</taxon>
        <taxon>Ascomycota</taxon>
        <taxon>Pezizomycotina</taxon>
        <taxon>Sordariomycetes</taxon>
        <taxon>Sordariomycetidae</taxon>
        <taxon>Diaporthales</taxon>
        <taxon>Diaporthaceae</taxon>
        <taxon>Diaporthe</taxon>
    </lineage>
</organism>